<sequence>MAEAATGFLEQLKSCIVWSWTYLWTVWFFIVLFLVYVLRVPLKINDNLSTVSMFLNTLTPKFYVALTGTSSLISGLILIFEWWYFRKYGTSFIEQVSVSHLRPLLGGVDNNSSNNSNSSNGDSDSNRQSVSECKVWRNPLNLFRGAEYNRYTWVTGREPLTYYDMNLSAQDHQTFFTCDSDHLRPADAIMQKAWRERNPQARISAAHEALEINEIRSRVEVPLIASSTIWEIKLLPKCATAYILLAEEEATTIAEAEKLFKQALKAGDGCYRRSQQLQHHGSQYEAQHRRDTNVLVYIKRRLAMCARRLGRTREAVKMMRDLMKEFPLLSMFNIHENLLEALLELQAYADVQAVLAKYDDISLPKSATICYTAALLKARAVSDKFSPEAASRRGLSTAEMNAVEAIHRAVEFNPHVPKYLLEMKSLILPPEHILKRGDSEAIAYAFFHLAHWKRVEGALNLLHCTWEGTFRMIPYPLEKGHLFYPYPICTETADRELLPSFHEVSVYPKKELPFFILFTAGLCSFTAMLALLTHQFPELMGVFAKAMSDIFCSAEFRDWNCKSIFMRVEDELEIPPAPQSQHFQN</sequence>
<protein>
    <recommendedName>
        <fullName>Suppressor of tumorigenicity 7 protein</fullName>
    </recommendedName>
</protein>
<dbReference type="EMBL" id="DP000233">
    <property type="protein sequence ID" value="AAR16224.2"/>
    <property type="molecule type" value="Genomic_DNA"/>
</dbReference>
<dbReference type="RefSeq" id="XP_009201996.1">
    <property type="nucleotide sequence ID" value="XM_009203732.3"/>
</dbReference>
<dbReference type="GlyCosmos" id="A0M8S0">
    <property type="glycosylation" value="1 site, No reported glycans"/>
</dbReference>
<dbReference type="Ensembl" id="ENSPANT00000048509.2">
    <property type="protein sequence ID" value="ENSPANP00000046499.1"/>
    <property type="gene ID" value="ENSPANG00000020407.4"/>
</dbReference>
<dbReference type="GeneID" id="100126671"/>
<dbReference type="CTD" id="7982"/>
<dbReference type="GeneTree" id="ENSGT00390000000873"/>
<dbReference type="OMA" id="DRCATAY"/>
<dbReference type="Proteomes" id="UP000028761">
    <property type="component" value="Chromosome 4"/>
</dbReference>
<dbReference type="Bgee" id="ENSPANG00000020407">
    <property type="expression patterns" value="Expressed in pancreas and 64 other cell types or tissues"/>
</dbReference>
<dbReference type="ExpressionAtlas" id="A0M8S0">
    <property type="expression patterns" value="baseline"/>
</dbReference>
<dbReference type="GO" id="GO:0016020">
    <property type="term" value="C:membrane"/>
    <property type="evidence" value="ECO:0007669"/>
    <property type="project" value="UniProtKB-SubCell"/>
</dbReference>
<dbReference type="CDD" id="cd11557">
    <property type="entry name" value="ST7"/>
    <property type="match status" value="1"/>
</dbReference>
<dbReference type="InterPro" id="IPR007311">
    <property type="entry name" value="ST7"/>
</dbReference>
<dbReference type="PANTHER" id="PTHR12745">
    <property type="entry name" value="SUPPRESSION OF TUMORIGENICITY 7"/>
    <property type="match status" value="1"/>
</dbReference>
<dbReference type="PANTHER" id="PTHR12745:SF10">
    <property type="entry name" value="SUPPRESSOR OF TUMORIGENICITY 7 PROTEIN"/>
    <property type="match status" value="1"/>
</dbReference>
<dbReference type="Pfam" id="PF04184">
    <property type="entry name" value="ST7"/>
    <property type="match status" value="1"/>
</dbReference>
<evidence type="ECO:0000250" key="1">
    <source>
        <dbReference type="UniProtKB" id="Q9NRC1"/>
    </source>
</evidence>
<evidence type="ECO:0000255" key="2"/>
<evidence type="ECO:0000305" key="3"/>
<gene>
    <name type="primary">ST7</name>
</gene>
<comment type="subcellular location">
    <subcellularLocation>
        <location evidence="3">Membrane</location>
        <topology evidence="3">Multi-pass membrane protein</topology>
    </subcellularLocation>
</comment>
<comment type="similarity">
    <text evidence="3">Belongs to the ST7 family.</text>
</comment>
<organism>
    <name type="scientific">Papio anubis</name>
    <name type="common">Olive baboon</name>
    <dbReference type="NCBI Taxonomy" id="9555"/>
    <lineage>
        <taxon>Eukaryota</taxon>
        <taxon>Metazoa</taxon>
        <taxon>Chordata</taxon>
        <taxon>Craniata</taxon>
        <taxon>Vertebrata</taxon>
        <taxon>Euteleostomi</taxon>
        <taxon>Mammalia</taxon>
        <taxon>Eutheria</taxon>
        <taxon>Euarchontoglires</taxon>
        <taxon>Primates</taxon>
        <taxon>Haplorrhini</taxon>
        <taxon>Catarrhini</taxon>
        <taxon>Cercopithecidae</taxon>
        <taxon>Cercopithecinae</taxon>
        <taxon>Papio</taxon>
    </lineage>
</organism>
<keyword id="KW-0325">Glycoprotein</keyword>
<keyword id="KW-0472">Membrane</keyword>
<keyword id="KW-0597">Phosphoprotein</keyword>
<keyword id="KW-1185">Reference proteome</keyword>
<keyword id="KW-0812">Transmembrane</keyword>
<keyword id="KW-1133">Transmembrane helix</keyword>
<accession>A0M8S0</accession>
<proteinExistence type="inferred from homology"/>
<reference key="1">
    <citation type="journal article" date="2003" name="Nature">
        <title>Comparative analyses of multi-species sequences from targeted genomic regions.</title>
        <authorList>
            <person name="Thomas J.W."/>
            <person name="Touchman J.W."/>
            <person name="Blakesley R.W."/>
            <person name="Bouffard G.G."/>
            <person name="Beckstrom-Sternberg S.M."/>
            <person name="Margulies E.H."/>
            <person name="Blanchette M."/>
            <person name="Siepel A.C."/>
            <person name="Thomas P.J."/>
            <person name="McDowell J.C."/>
            <person name="Maskeri B."/>
            <person name="Hansen N.F."/>
            <person name="Schwartz M.S."/>
            <person name="Weber R.J."/>
            <person name="Kent W.J."/>
            <person name="Karolchik D."/>
            <person name="Bruen T.C."/>
            <person name="Bevan R."/>
            <person name="Cutler D.J."/>
            <person name="Schwartz S."/>
            <person name="Elnitski L."/>
            <person name="Idol J.R."/>
            <person name="Prasad A.B."/>
            <person name="Lee-Lin S.-Q."/>
            <person name="Maduro V.V.B."/>
            <person name="Summers T.J."/>
            <person name="Portnoy M.E."/>
            <person name="Dietrich N.L."/>
            <person name="Akhter N."/>
            <person name="Ayele K."/>
            <person name="Benjamin B."/>
            <person name="Cariaga K."/>
            <person name="Brinkley C.P."/>
            <person name="Brooks S.Y."/>
            <person name="Granite S."/>
            <person name="Guan X."/>
            <person name="Gupta J."/>
            <person name="Haghighi P."/>
            <person name="Ho S.-L."/>
            <person name="Huang M.C."/>
            <person name="Karlins E."/>
            <person name="Laric P.L."/>
            <person name="Legaspi R."/>
            <person name="Lim M.J."/>
            <person name="Maduro Q.L."/>
            <person name="Masiello C.A."/>
            <person name="Mastrian S.D."/>
            <person name="McCloskey J.C."/>
            <person name="Pearson R."/>
            <person name="Stantripop S."/>
            <person name="Tiongson E.E."/>
            <person name="Tran J.T."/>
            <person name="Tsurgeon C."/>
            <person name="Vogt J.L."/>
            <person name="Walker M.A."/>
            <person name="Wetherby K.D."/>
            <person name="Wiggins L.S."/>
            <person name="Young A.C."/>
            <person name="Zhang L.-H."/>
            <person name="Osoegawa K."/>
            <person name="Zhu B."/>
            <person name="Zhao B."/>
            <person name="Shu C.L."/>
            <person name="De Jong P.J."/>
            <person name="Lawrence C.E."/>
            <person name="Smit A.F."/>
            <person name="Chakravarti A."/>
            <person name="Haussler D."/>
            <person name="Green P."/>
            <person name="Miller W."/>
            <person name="Green E.D."/>
        </authorList>
    </citation>
    <scope>NUCLEOTIDE SEQUENCE [LARGE SCALE GENOMIC DNA]</scope>
</reference>
<name>ST7_PAPAN</name>
<feature type="chain" id="PRO_0000339211" description="Suppressor of tumorigenicity 7 protein">
    <location>
        <begin position="1"/>
        <end position="585"/>
    </location>
</feature>
<feature type="transmembrane region" description="Helical" evidence="2">
    <location>
        <begin position="15"/>
        <end position="35"/>
    </location>
</feature>
<feature type="transmembrane region" description="Helical" evidence="2">
    <location>
        <begin position="62"/>
        <end position="82"/>
    </location>
</feature>
<feature type="transmembrane region" description="Helical" evidence="2">
    <location>
        <begin position="512"/>
        <end position="532"/>
    </location>
</feature>
<feature type="modified residue" description="Phosphoserine" evidence="1">
    <location>
        <position position="386"/>
    </location>
</feature>
<feature type="glycosylation site" description="N-linked (GlcNAc...) asparagine" evidence="2">
    <location>
        <position position="47"/>
    </location>
</feature>